<accession>O51669</accession>
<evidence type="ECO:0000255" key="1">
    <source>
        <dbReference type="HAMAP-Rule" id="MF_01981"/>
    </source>
</evidence>
<organism>
    <name type="scientific">Borreliella burgdorferi (strain ATCC 35210 / DSM 4680 / CIP 102532 / B31)</name>
    <name type="common">Borrelia burgdorferi</name>
    <dbReference type="NCBI Taxonomy" id="224326"/>
    <lineage>
        <taxon>Bacteria</taxon>
        <taxon>Pseudomonadati</taxon>
        <taxon>Spirochaetota</taxon>
        <taxon>Spirochaetia</taxon>
        <taxon>Spirochaetales</taxon>
        <taxon>Borreliaceae</taxon>
        <taxon>Borreliella</taxon>
    </lineage>
</organism>
<feature type="chain" id="PRO_0000429714" description="ATP-dependent 6-phosphofructokinase">
    <location>
        <begin position="1"/>
        <end position="447"/>
    </location>
</feature>
<feature type="active site" description="Proton acceptor" evidence="1">
    <location>
        <position position="210"/>
    </location>
</feature>
<feature type="binding site" evidence="1">
    <location>
        <position position="88"/>
    </location>
    <ligand>
        <name>ATP</name>
        <dbReference type="ChEBI" id="CHEBI:30616"/>
    </ligand>
</feature>
<feature type="binding site" evidence="1">
    <location>
        <begin position="154"/>
        <end position="155"/>
    </location>
    <ligand>
        <name>ATP</name>
        <dbReference type="ChEBI" id="CHEBI:30616"/>
    </ligand>
</feature>
<feature type="binding site" evidence="1">
    <location>
        <begin position="179"/>
        <end position="182"/>
    </location>
    <ligand>
        <name>ATP</name>
        <dbReference type="ChEBI" id="CHEBI:30616"/>
    </ligand>
</feature>
<feature type="binding site" evidence="1">
    <location>
        <position position="180"/>
    </location>
    <ligand>
        <name>Mg(2+)</name>
        <dbReference type="ChEBI" id="CHEBI:18420"/>
        <note>catalytic</note>
    </ligand>
</feature>
<feature type="binding site" evidence="1">
    <location>
        <begin position="208"/>
        <end position="210"/>
    </location>
    <ligand>
        <name>substrate</name>
    </ligand>
</feature>
<feature type="binding site" evidence="1">
    <location>
        <begin position="253"/>
        <end position="255"/>
    </location>
    <ligand>
        <name>substrate</name>
    </ligand>
</feature>
<feature type="binding site" evidence="1">
    <location>
        <position position="315"/>
    </location>
    <ligand>
        <name>substrate</name>
    </ligand>
</feature>
<feature type="binding site" evidence="1">
    <location>
        <begin position="368"/>
        <end position="371"/>
    </location>
    <ligand>
        <name>substrate</name>
    </ligand>
</feature>
<feature type="site" description="Important for substrate specificity; cannot use PPi as phosphoryl donor" evidence="1">
    <location>
        <position position="181"/>
    </location>
</feature>
<reference key="1">
    <citation type="journal article" date="1997" name="Nature">
        <title>Genomic sequence of a Lyme disease spirochaete, Borrelia burgdorferi.</title>
        <authorList>
            <person name="Fraser C.M."/>
            <person name="Casjens S."/>
            <person name="Huang W.M."/>
            <person name="Sutton G.G."/>
            <person name="Clayton R.A."/>
            <person name="Lathigra R."/>
            <person name="White O."/>
            <person name="Ketchum K.A."/>
            <person name="Dodson R.J."/>
            <person name="Hickey E.K."/>
            <person name="Gwinn M.L."/>
            <person name="Dougherty B.A."/>
            <person name="Tomb J.-F."/>
            <person name="Fleischmann R.D."/>
            <person name="Richardson D.L."/>
            <person name="Peterson J.D."/>
            <person name="Kerlavage A.R."/>
            <person name="Quackenbush J."/>
            <person name="Salzberg S.L."/>
            <person name="Hanson M."/>
            <person name="van Vugt R."/>
            <person name="Palmer N."/>
            <person name="Adams M.D."/>
            <person name="Gocayne J.D."/>
            <person name="Weidman J.F."/>
            <person name="Utterback T.R."/>
            <person name="Watthey L."/>
            <person name="McDonald L.A."/>
            <person name="Artiach P."/>
            <person name="Bowman C."/>
            <person name="Garland S.A."/>
            <person name="Fujii C."/>
            <person name="Cotton M.D."/>
            <person name="Horst K."/>
            <person name="Roberts K.M."/>
            <person name="Hatch B."/>
            <person name="Smith H.O."/>
            <person name="Venter J.C."/>
        </authorList>
    </citation>
    <scope>NUCLEOTIDE SEQUENCE [LARGE SCALE GENOMIC DNA]</scope>
    <source>
        <strain>ATCC 35210 / DSM 4680 / CIP 102532 / B31</strain>
    </source>
</reference>
<dbReference type="EC" id="2.7.1.11" evidence="1"/>
<dbReference type="EMBL" id="AE000783">
    <property type="protein sequence ID" value="AAC67070.2"/>
    <property type="molecule type" value="Genomic_DNA"/>
</dbReference>
<dbReference type="RefSeq" id="NP_212861.2">
    <property type="nucleotide sequence ID" value="NC_001318.1"/>
</dbReference>
<dbReference type="RefSeq" id="WP_002656298.1">
    <property type="nucleotide sequence ID" value="NC_001318.1"/>
</dbReference>
<dbReference type="SMR" id="O51669"/>
<dbReference type="STRING" id="224326.BB_0727"/>
<dbReference type="PaxDb" id="224326-BB_0727"/>
<dbReference type="EnsemblBacteria" id="AAC67070">
    <property type="protein sequence ID" value="AAC67070"/>
    <property type="gene ID" value="BB_0727"/>
</dbReference>
<dbReference type="KEGG" id="bbu:BB_0727"/>
<dbReference type="PATRIC" id="fig|224326.49.peg.1118"/>
<dbReference type="HOGENOM" id="CLU_020655_7_4_12"/>
<dbReference type="OrthoDB" id="9802503at2"/>
<dbReference type="UniPathway" id="UPA00109">
    <property type="reaction ID" value="UER00182"/>
</dbReference>
<dbReference type="Proteomes" id="UP000001807">
    <property type="component" value="Chromosome"/>
</dbReference>
<dbReference type="GO" id="GO:0005829">
    <property type="term" value="C:cytosol"/>
    <property type="evidence" value="ECO:0000314"/>
    <property type="project" value="CAFA"/>
</dbReference>
<dbReference type="GO" id="GO:0003872">
    <property type="term" value="F:6-phosphofructokinase activity"/>
    <property type="evidence" value="ECO:0007669"/>
    <property type="project" value="UniProtKB-UniRule"/>
</dbReference>
<dbReference type="GO" id="GO:0005524">
    <property type="term" value="F:ATP binding"/>
    <property type="evidence" value="ECO:0007669"/>
    <property type="project" value="UniProtKB-KW"/>
</dbReference>
<dbReference type="GO" id="GO:0046872">
    <property type="term" value="F:metal ion binding"/>
    <property type="evidence" value="ECO:0007669"/>
    <property type="project" value="UniProtKB-KW"/>
</dbReference>
<dbReference type="GO" id="GO:0006002">
    <property type="term" value="P:fructose 6-phosphate metabolic process"/>
    <property type="evidence" value="ECO:0007669"/>
    <property type="project" value="InterPro"/>
</dbReference>
<dbReference type="FunFam" id="3.40.50.450:FF:000002">
    <property type="entry name" value="ATP-dependent 6-phosphofructokinase"/>
    <property type="match status" value="1"/>
</dbReference>
<dbReference type="Gene3D" id="3.40.50.450">
    <property type="match status" value="1"/>
</dbReference>
<dbReference type="HAMAP" id="MF_01981">
    <property type="entry name" value="Phosphofructokinase_II_X"/>
    <property type="match status" value="1"/>
</dbReference>
<dbReference type="InterPro" id="IPR022953">
    <property type="entry name" value="ATP_PFK"/>
</dbReference>
<dbReference type="InterPro" id="IPR050929">
    <property type="entry name" value="PFKA"/>
</dbReference>
<dbReference type="InterPro" id="IPR000023">
    <property type="entry name" value="Phosphofructokinase_dom"/>
</dbReference>
<dbReference type="InterPro" id="IPR035966">
    <property type="entry name" value="PKF_sf"/>
</dbReference>
<dbReference type="InterPro" id="IPR012004">
    <property type="entry name" value="PyroP-dep_PFK_TP0108"/>
</dbReference>
<dbReference type="NCBIfam" id="NF005301">
    <property type="entry name" value="PRK06830.1"/>
    <property type="match status" value="1"/>
</dbReference>
<dbReference type="PANTHER" id="PTHR45770">
    <property type="entry name" value="ATP-DEPENDENT 6-PHOSPHOFRUCTOKINASE 1"/>
    <property type="match status" value="1"/>
</dbReference>
<dbReference type="Pfam" id="PF00365">
    <property type="entry name" value="PFK"/>
    <property type="match status" value="1"/>
</dbReference>
<dbReference type="PIRSF" id="PIRSF000534">
    <property type="entry name" value="PPi_PFK_TP0108"/>
    <property type="match status" value="1"/>
</dbReference>
<dbReference type="PRINTS" id="PR00476">
    <property type="entry name" value="PHFRCTKINASE"/>
</dbReference>
<dbReference type="SUPFAM" id="SSF53784">
    <property type="entry name" value="Phosphofructokinase"/>
    <property type="match status" value="1"/>
</dbReference>
<sequence length="447" mass="49788">MYRIKNENLDFKIDSLGECKQNNPLIDFYASEGSSHFVNEKNKIKFSVYRNEDKGDRYEDVLLEKAGPREKIYFVPRHVKAAITTCGGLCPGFNDVIRSIVRTLWKIYGVRNIYGVKFGYQGLLPESNSPFINLNPDVVDDINKFGGTILGSSRGGIKPVEIVDTLERMNINMIFNIGGDGTQKGSLLIAEEIEKRNLKIAVVGIPKTVDNDFMFVQKSFGFETAVEQAVAAVAGAHFEANSAYNGIGLVKVMGRDSGFIAAHTALSSNDVNFCLIPELDFDIEGPNGFLVHLERRLLEKESLEEIPHAVILIAEGAGQKYFDHFPKKKDDSGNLLYEDIGLYIKDKITEYFKAKNIQFTLKYIDPSYIIRSSPANASDSLYCARLGSNAVHAAMAGKTKMLISLWSTKFVHIPIKMAVIDRNKVNPNGSFWRDVLSSTGQPISMKN</sequence>
<name>PFKA_BORBU</name>
<protein>
    <recommendedName>
        <fullName evidence="1">ATP-dependent 6-phosphofructokinase</fullName>
        <shortName evidence="1">ATP-PFK</shortName>
        <shortName evidence="1">Phosphofructokinase</shortName>
        <ecNumber evidence="1">2.7.1.11</ecNumber>
    </recommendedName>
    <alternativeName>
        <fullName evidence="1">Phosphohexokinase</fullName>
    </alternativeName>
</protein>
<gene>
    <name evidence="1" type="primary">pfkA</name>
    <name type="ordered locus">BB_0727</name>
</gene>
<proteinExistence type="inferred from homology"/>
<comment type="function">
    <text evidence="1">Catalyzes the phosphorylation of D-fructose 6-phosphate to fructose 1,6-bisphosphate by ATP, the first committing step of glycolysis.</text>
</comment>
<comment type="catalytic activity">
    <reaction evidence="1">
        <text>beta-D-fructose 6-phosphate + ATP = beta-D-fructose 1,6-bisphosphate + ADP + H(+)</text>
        <dbReference type="Rhea" id="RHEA:16109"/>
        <dbReference type="ChEBI" id="CHEBI:15378"/>
        <dbReference type="ChEBI" id="CHEBI:30616"/>
        <dbReference type="ChEBI" id="CHEBI:32966"/>
        <dbReference type="ChEBI" id="CHEBI:57634"/>
        <dbReference type="ChEBI" id="CHEBI:456216"/>
        <dbReference type="EC" id="2.7.1.11"/>
    </reaction>
</comment>
<comment type="cofactor">
    <cofactor evidence="1">
        <name>Mg(2+)</name>
        <dbReference type="ChEBI" id="CHEBI:18420"/>
    </cofactor>
</comment>
<comment type="pathway">
    <text evidence="1">Carbohydrate degradation; glycolysis; D-glyceraldehyde 3-phosphate and glycerone phosphate from D-glucose: step 3/4.</text>
</comment>
<comment type="subunit">
    <text evidence="1">Homodimer.</text>
</comment>
<comment type="subcellular location">
    <subcellularLocation>
        <location evidence="1">Cytoplasm</location>
    </subcellularLocation>
</comment>
<comment type="similarity">
    <text evidence="1">Belongs to the phosphofructokinase type A (PFKA) family. PPi-dependent PFK group II subfamily. Atypical ATP-dependent clade 'X' sub-subfamily.</text>
</comment>
<keyword id="KW-0067">ATP-binding</keyword>
<keyword id="KW-0963">Cytoplasm</keyword>
<keyword id="KW-0324">Glycolysis</keyword>
<keyword id="KW-0418">Kinase</keyword>
<keyword id="KW-0460">Magnesium</keyword>
<keyword id="KW-0479">Metal-binding</keyword>
<keyword id="KW-0547">Nucleotide-binding</keyword>
<keyword id="KW-1185">Reference proteome</keyword>
<keyword id="KW-0808">Transferase</keyword>